<keyword id="KW-0030">Aminoacyl-tRNA synthetase</keyword>
<keyword id="KW-0067">ATP-binding</keyword>
<keyword id="KW-0963">Cytoplasm</keyword>
<keyword id="KW-0436">Ligase</keyword>
<keyword id="KW-0547">Nucleotide-binding</keyword>
<keyword id="KW-0648">Protein biosynthesis</keyword>
<dbReference type="EC" id="6.1.1.19" evidence="1"/>
<dbReference type="EMBL" id="CP000001">
    <property type="protein sequence ID" value="AAU18282.1"/>
    <property type="molecule type" value="Genomic_DNA"/>
</dbReference>
<dbReference type="RefSeq" id="WP_000385003.1">
    <property type="nucleotide sequence ID" value="NC_006274.1"/>
</dbReference>
<dbReference type="SMR" id="Q63C01"/>
<dbReference type="KEGG" id="bcz:BCE33L1974"/>
<dbReference type="PATRIC" id="fig|288681.22.peg.3550"/>
<dbReference type="Proteomes" id="UP000002612">
    <property type="component" value="Chromosome"/>
</dbReference>
<dbReference type="GO" id="GO:0005737">
    <property type="term" value="C:cytoplasm"/>
    <property type="evidence" value="ECO:0007669"/>
    <property type="project" value="UniProtKB-SubCell"/>
</dbReference>
<dbReference type="GO" id="GO:0004814">
    <property type="term" value="F:arginine-tRNA ligase activity"/>
    <property type="evidence" value="ECO:0007669"/>
    <property type="project" value="UniProtKB-UniRule"/>
</dbReference>
<dbReference type="GO" id="GO:0005524">
    <property type="term" value="F:ATP binding"/>
    <property type="evidence" value="ECO:0007669"/>
    <property type="project" value="UniProtKB-UniRule"/>
</dbReference>
<dbReference type="GO" id="GO:0006420">
    <property type="term" value="P:arginyl-tRNA aminoacylation"/>
    <property type="evidence" value="ECO:0007669"/>
    <property type="project" value="UniProtKB-UniRule"/>
</dbReference>
<dbReference type="CDD" id="cd07956">
    <property type="entry name" value="Anticodon_Ia_Arg"/>
    <property type="match status" value="1"/>
</dbReference>
<dbReference type="CDD" id="cd00671">
    <property type="entry name" value="ArgRS_core"/>
    <property type="match status" value="1"/>
</dbReference>
<dbReference type="FunFam" id="3.40.50.620:FF:000116">
    <property type="entry name" value="Arginine--tRNA ligase"/>
    <property type="match status" value="1"/>
</dbReference>
<dbReference type="FunFam" id="1.10.730.10:FF:000006">
    <property type="entry name" value="Arginyl-tRNA synthetase 2, mitochondrial"/>
    <property type="match status" value="1"/>
</dbReference>
<dbReference type="Gene3D" id="3.30.1360.70">
    <property type="entry name" value="Arginyl tRNA synthetase N-terminal domain"/>
    <property type="match status" value="1"/>
</dbReference>
<dbReference type="Gene3D" id="3.40.50.620">
    <property type="entry name" value="HUPs"/>
    <property type="match status" value="1"/>
</dbReference>
<dbReference type="Gene3D" id="1.10.730.10">
    <property type="entry name" value="Isoleucyl-tRNA Synthetase, Domain 1"/>
    <property type="match status" value="1"/>
</dbReference>
<dbReference type="HAMAP" id="MF_00123">
    <property type="entry name" value="Arg_tRNA_synth"/>
    <property type="match status" value="1"/>
</dbReference>
<dbReference type="InterPro" id="IPR001278">
    <property type="entry name" value="Arg-tRNA-ligase"/>
</dbReference>
<dbReference type="InterPro" id="IPR005148">
    <property type="entry name" value="Arg-tRNA-synth_N"/>
</dbReference>
<dbReference type="InterPro" id="IPR036695">
    <property type="entry name" value="Arg-tRNA-synth_N_sf"/>
</dbReference>
<dbReference type="InterPro" id="IPR035684">
    <property type="entry name" value="ArgRS_core"/>
</dbReference>
<dbReference type="InterPro" id="IPR008909">
    <property type="entry name" value="DALR_anticod-bd"/>
</dbReference>
<dbReference type="InterPro" id="IPR014729">
    <property type="entry name" value="Rossmann-like_a/b/a_fold"/>
</dbReference>
<dbReference type="InterPro" id="IPR009080">
    <property type="entry name" value="tRNAsynth_Ia_anticodon-bd"/>
</dbReference>
<dbReference type="NCBIfam" id="TIGR00456">
    <property type="entry name" value="argS"/>
    <property type="match status" value="1"/>
</dbReference>
<dbReference type="PANTHER" id="PTHR11956:SF5">
    <property type="entry name" value="ARGININE--TRNA LIGASE, CYTOPLASMIC"/>
    <property type="match status" value="1"/>
</dbReference>
<dbReference type="PANTHER" id="PTHR11956">
    <property type="entry name" value="ARGINYL-TRNA SYNTHETASE"/>
    <property type="match status" value="1"/>
</dbReference>
<dbReference type="Pfam" id="PF03485">
    <property type="entry name" value="Arg_tRNA_synt_N"/>
    <property type="match status" value="1"/>
</dbReference>
<dbReference type="Pfam" id="PF05746">
    <property type="entry name" value="DALR_1"/>
    <property type="match status" value="1"/>
</dbReference>
<dbReference type="Pfam" id="PF00750">
    <property type="entry name" value="tRNA-synt_1d"/>
    <property type="match status" value="1"/>
</dbReference>
<dbReference type="PRINTS" id="PR01038">
    <property type="entry name" value="TRNASYNTHARG"/>
</dbReference>
<dbReference type="SMART" id="SM01016">
    <property type="entry name" value="Arg_tRNA_synt_N"/>
    <property type="match status" value="1"/>
</dbReference>
<dbReference type="SMART" id="SM00836">
    <property type="entry name" value="DALR_1"/>
    <property type="match status" value="1"/>
</dbReference>
<dbReference type="SUPFAM" id="SSF47323">
    <property type="entry name" value="Anticodon-binding domain of a subclass of class I aminoacyl-tRNA synthetases"/>
    <property type="match status" value="1"/>
</dbReference>
<dbReference type="SUPFAM" id="SSF55190">
    <property type="entry name" value="Arginyl-tRNA synthetase (ArgRS), N-terminal 'additional' domain"/>
    <property type="match status" value="1"/>
</dbReference>
<dbReference type="SUPFAM" id="SSF52374">
    <property type="entry name" value="Nucleotidylyl transferase"/>
    <property type="match status" value="1"/>
</dbReference>
<proteinExistence type="inferred from homology"/>
<accession>Q63C01</accession>
<comment type="catalytic activity">
    <reaction evidence="1">
        <text>tRNA(Arg) + L-arginine + ATP = L-arginyl-tRNA(Arg) + AMP + diphosphate</text>
        <dbReference type="Rhea" id="RHEA:20301"/>
        <dbReference type="Rhea" id="RHEA-COMP:9658"/>
        <dbReference type="Rhea" id="RHEA-COMP:9673"/>
        <dbReference type="ChEBI" id="CHEBI:30616"/>
        <dbReference type="ChEBI" id="CHEBI:32682"/>
        <dbReference type="ChEBI" id="CHEBI:33019"/>
        <dbReference type="ChEBI" id="CHEBI:78442"/>
        <dbReference type="ChEBI" id="CHEBI:78513"/>
        <dbReference type="ChEBI" id="CHEBI:456215"/>
        <dbReference type="EC" id="6.1.1.19"/>
    </reaction>
</comment>
<comment type="subunit">
    <text evidence="1">Monomer.</text>
</comment>
<comment type="subcellular location">
    <subcellularLocation>
        <location evidence="1">Cytoplasm</location>
    </subcellularLocation>
</comment>
<comment type="similarity">
    <text evidence="1">Belongs to the class-I aminoacyl-tRNA synthetase family.</text>
</comment>
<gene>
    <name evidence="1" type="primary">argS1</name>
    <name type="ordered locus">BCE33L1974</name>
</gene>
<organism>
    <name type="scientific">Bacillus cereus (strain ZK / E33L)</name>
    <dbReference type="NCBI Taxonomy" id="288681"/>
    <lineage>
        <taxon>Bacteria</taxon>
        <taxon>Bacillati</taxon>
        <taxon>Bacillota</taxon>
        <taxon>Bacilli</taxon>
        <taxon>Bacillales</taxon>
        <taxon>Bacillaceae</taxon>
        <taxon>Bacillus</taxon>
        <taxon>Bacillus cereus group</taxon>
    </lineage>
</organism>
<feature type="chain" id="PRO_0000241981" description="Arginine--tRNA ligase 1">
    <location>
        <begin position="1"/>
        <end position="562"/>
    </location>
</feature>
<feature type="short sequence motif" description="'HIGH' region">
    <location>
        <begin position="122"/>
        <end position="132"/>
    </location>
</feature>
<evidence type="ECO:0000255" key="1">
    <source>
        <dbReference type="HAMAP-Rule" id="MF_00123"/>
    </source>
</evidence>
<sequence>MDYKTQFAESLSNIFTNELTQKQILDLIETPKQDEFGDAAFPCFSLAKQYKKSPAIIAKEVAEKLSDPFFTKVEAVGPYVNVFFNRDTVSDAVLKTILAEKEEYGQNHFGCEKTVVIDYSSPNIAKPFSMGHLRSTMIGNSLKHIAEKCGYEVVGINYIGDWGTQFGKLITAYKKWGNEAVVKEDPIRELFKLYVQFHEEIKDDEELEEEGRAWFKKLEEGDEEAVELWNWFRHESLKEFSRIYELLGVEFTNFQGEAFYNNLMEDFIGILEEHDLLEESEGALVVNLEEEGMPPCLIRKSDGATIYATRDLTAALYRQNTFGFDKALYVVGPEQSLHFNQFFTVLKKLGYTWVDGMEHVPFGFILKDGKKMSTRKGRVILLEEVLEEAIELAKQNIEEKNPNLKQKEEVAKQVGAGAVIFHDLKNERMHNIEFSLENMLKFEGETGPYVQYTHARACSILRKESVEFETCTFTLKDDYSWNIVKLLNKFPEVIEAACNKNEPSVISKYVLDVAQSFNKYYGNVRILDENAEKDSRLALVYAVTVVLKEGLRLLGVEAPEEM</sequence>
<reference key="1">
    <citation type="journal article" date="2006" name="J. Bacteriol.">
        <title>Pathogenomic sequence analysis of Bacillus cereus and Bacillus thuringiensis isolates closely related to Bacillus anthracis.</title>
        <authorList>
            <person name="Han C.S."/>
            <person name="Xie G."/>
            <person name="Challacombe J.F."/>
            <person name="Altherr M.R."/>
            <person name="Bhotika S.S."/>
            <person name="Bruce D."/>
            <person name="Campbell C.S."/>
            <person name="Campbell M.L."/>
            <person name="Chen J."/>
            <person name="Chertkov O."/>
            <person name="Cleland C."/>
            <person name="Dimitrijevic M."/>
            <person name="Doggett N.A."/>
            <person name="Fawcett J.J."/>
            <person name="Glavina T."/>
            <person name="Goodwin L.A."/>
            <person name="Hill K.K."/>
            <person name="Hitchcock P."/>
            <person name="Jackson P.J."/>
            <person name="Keim P."/>
            <person name="Kewalramani A.R."/>
            <person name="Longmire J."/>
            <person name="Lucas S."/>
            <person name="Malfatti S."/>
            <person name="McMurry K."/>
            <person name="Meincke L.J."/>
            <person name="Misra M."/>
            <person name="Moseman B.L."/>
            <person name="Mundt M."/>
            <person name="Munk A.C."/>
            <person name="Okinaka R.T."/>
            <person name="Parson-Quintana B."/>
            <person name="Reilly L.P."/>
            <person name="Richardson P."/>
            <person name="Robinson D.L."/>
            <person name="Rubin E."/>
            <person name="Saunders E."/>
            <person name="Tapia R."/>
            <person name="Tesmer J.G."/>
            <person name="Thayer N."/>
            <person name="Thompson L.S."/>
            <person name="Tice H."/>
            <person name="Ticknor L.O."/>
            <person name="Wills P.L."/>
            <person name="Brettin T.S."/>
            <person name="Gilna P."/>
        </authorList>
    </citation>
    <scope>NUCLEOTIDE SEQUENCE [LARGE SCALE GENOMIC DNA]</scope>
    <source>
        <strain>ZK / E33L</strain>
    </source>
</reference>
<name>SYR1_BACCZ</name>
<protein>
    <recommendedName>
        <fullName evidence="1">Arginine--tRNA ligase 1</fullName>
        <ecNumber evidence="1">6.1.1.19</ecNumber>
    </recommendedName>
    <alternativeName>
        <fullName evidence="1">Arginyl-tRNA synthetase 1</fullName>
        <shortName evidence="1">ArgRS 1</shortName>
    </alternativeName>
</protein>